<organism>
    <name type="scientific">Homo sapiens</name>
    <name type="common">Human</name>
    <dbReference type="NCBI Taxonomy" id="9606"/>
    <lineage>
        <taxon>Eukaryota</taxon>
        <taxon>Metazoa</taxon>
        <taxon>Chordata</taxon>
        <taxon>Craniata</taxon>
        <taxon>Vertebrata</taxon>
        <taxon>Euteleostomi</taxon>
        <taxon>Mammalia</taxon>
        <taxon>Eutheria</taxon>
        <taxon>Euarchontoglires</taxon>
        <taxon>Primates</taxon>
        <taxon>Haplorrhini</taxon>
        <taxon>Catarrhini</taxon>
        <taxon>Hominidae</taxon>
        <taxon>Homo</taxon>
    </lineage>
</organism>
<sequence>METGRQTGVSAEMLAMPRGLKGSKKDGIPEDLDGNLEAPRDQEGELRSEDVMDLTEGDSEASASAPPAAKRRKTHTKGKKESKPTVDAEEAQRMTTLLSAMSEEQLSRYEVCRRSAFPRARVAGLMRAITGSSVSENAAIAMAGIAKLFVGEVVEEALDVCEMWGETPPLQPKHLREAVRRLKPKGLFPNSNCKRIMF</sequence>
<protein>
    <recommendedName>
        <fullName>TATA-box-binding protein-associated factor 11-like protein 8</fullName>
    </recommendedName>
</protein>
<evidence type="ECO:0000256" key="1">
    <source>
        <dbReference type="SAM" id="MobiDB-lite"/>
    </source>
</evidence>
<evidence type="ECO:0000269" key="2">
    <source>
    </source>
</evidence>
<evidence type="ECO:0000305" key="3"/>
<evidence type="ECO:0000312" key="4">
    <source>
        <dbReference type="HGNC" id="HGNC:53851"/>
    </source>
</evidence>
<feature type="chain" id="PRO_0000456148" description="TATA-box-binding protein-associated factor 11-like protein 8">
    <location>
        <begin position="1"/>
        <end position="198"/>
    </location>
</feature>
<feature type="region of interest" description="Disordered" evidence="1">
    <location>
        <begin position="1"/>
        <end position="90"/>
    </location>
</feature>
<feature type="compositionally biased region" description="Basic and acidic residues" evidence="1">
    <location>
        <begin position="38"/>
        <end position="50"/>
    </location>
</feature>
<feature type="compositionally biased region" description="Basic residues" evidence="1">
    <location>
        <begin position="69"/>
        <end position="78"/>
    </location>
</feature>
<feature type="compositionally biased region" description="Basic and acidic residues" evidence="1">
    <location>
        <begin position="79"/>
        <end position="90"/>
    </location>
</feature>
<name>TFKL8_HUMAN</name>
<keyword id="KW-1185">Reference proteome</keyword>
<proteinExistence type="evidence at transcript level"/>
<accession>P0DW13</accession>
<comment type="tissue specificity">
    <text evidence="2">Expressed in fetal brain and testis.</text>
</comment>
<comment type="similarity">
    <text evidence="3">Belongs to the TAF11 family.</text>
</comment>
<gene>
    <name evidence="4" type="primary">TAF11L8</name>
</gene>
<dbReference type="EMBL" id="AC106774">
    <property type="status" value="NOT_ANNOTATED_CDS"/>
    <property type="molecule type" value="Genomic_DNA"/>
</dbReference>
<dbReference type="EMBL" id="AC233724">
    <property type="status" value="NOT_ANNOTATED_CDS"/>
    <property type="molecule type" value="Genomic_DNA"/>
</dbReference>
<dbReference type="CCDS" id="CCDS93694.1"/>
<dbReference type="RefSeq" id="NP_001388610.1">
    <property type="nucleotide sequence ID" value="NM_001401681.1"/>
</dbReference>
<dbReference type="SMR" id="P0DW13"/>
<dbReference type="FunCoup" id="P0DW13">
    <property type="interactions" value="2"/>
</dbReference>
<dbReference type="BioMuta" id="ENSG00000283967"/>
<dbReference type="Ensembl" id="ENST00000640803.1">
    <property type="protein sequence ID" value="ENSP00000491174.1"/>
    <property type="gene ID" value="ENSG00000283967.1"/>
</dbReference>
<dbReference type="GeneID" id="112488737"/>
<dbReference type="MANE-Select" id="ENST00000640803.1">
    <property type="protein sequence ID" value="ENSP00000491174.1"/>
    <property type="RefSeq nucleotide sequence ID" value="NM_001401681.1"/>
    <property type="RefSeq protein sequence ID" value="NP_001388610.1"/>
</dbReference>
<dbReference type="AGR" id="HGNC:53851"/>
<dbReference type="GeneCards" id="TAF11L8"/>
<dbReference type="HGNC" id="HGNC:53851">
    <property type="gene designation" value="TAF11L8"/>
</dbReference>
<dbReference type="HPA" id="ENSG00000283967">
    <property type="expression patterns" value="Not detected"/>
</dbReference>
<dbReference type="HPA" id="ENSG00000284042">
    <property type="expression patterns" value="Not detected"/>
</dbReference>
<dbReference type="HPA" id="ENSG00000284234">
    <property type="expression patterns" value="Not detected"/>
</dbReference>
<dbReference type="HPA" id="ENSG00000284356">
    <property type="expression patterns" value="Not detected"/>
</dbReference>
<dbReference type="HPA" id="ENSG00000284465">
    <property type="expression patterns" value="Not detected"/>
</dbReference>
<dbReference type="OrthoDB" id="9532091at2759"/>
<dbReference type="PRO" id="PR:P0DW13"/>
<dbReference type="Proteomes" id="UP000005640">
    <property type="component" value="Chromosome 5"/>
</dbReference>
<dbReference type="GO" id="GO:0005669">
    <property type="term" value="C:transcription factor TFIID complex"/>
    <property type="evidence" value="ECO:0000318"/>
    <property type="project" value="GO_Central"/>
</dbReference>
<dbReference type="GO" id="GO:0046982">
    <property type="term" value="F:protein heterodimerization activity"/>
    <property type="evidence" value="ECO:0007669"/>
    <property type="project" value="InterPro"/>
</dbReference>
<dbReference type="GO" id="GO:0051123">
    <property type="term" value="P:RNA polymerase II preinitiation complex assembly"/>
    <property type="evidence" value="ECO:0000318"/>
    <property type="project" value="GO_Central"/>
</dbReference>
<dbReference type="CDD" id="cd08048">
    <property type="entry name" value="HFD_TAF11"/>
    <property type="match status" value="1"/>
</dbReference>
<dbReference type="FunFam" id="1.10.20.10:FF:000025">
    <property type="entry name" value="Transcription initiation factor TFIID subunit 11"/>
    <property type="match status" value="1"/>
</dbReference>
<dbReference type="Gene3D" id="1.10.20.10">
    <property type="entry name" value="Histone, subunit A"/>
    <property type="match status" value="1"/>
</dbReference>
<dbReference type="InterPro" id="IPR009072">
    <property type="entry name" value="Histone-fold"/>
</dbReference>
<dbReference type="InterPro" id="IPR045127">
    <property type="entry name" value="TAF11-like"/>
</dbReference>
<dbReference type="InterPro" id="IPR006809">
    <property type="entry name" value="TAFII28_dom"/>
</dbReference>
<dbReference type="PANTHER" id="PTHR13218:SF18">
    <property type="entry name" value="TATA-BOX-BINDING PROTEIN-ASSOCIATED FACTOR 11-LIKE PROTEIN 10-RELATED"/>
    <property type="match status" value="1"/>
</dbReference>
<dbReference type="PANTHER" id="PTHR13218">
    <property type="entry name" value="TRANSCRIPTION INITIATION FACTOR TFIID SUBUNIT 11-RELATED"/>
    <property type="match status" value="1"/>
</dbReference>
<dbReference type="Pfam" id="PF04719">
    <property type="entry name" value="TAFII28"/>
    <property type="match status" value="1"/>
</dbReference>
<dbReference type="SUPFAM" id="SSF47113">
    <property type="entry name" value="Histone-fold"/>
    <property type="match status" value="1"/>
</dbReference>
<reference key="1">
    <citation type="journal article" date="2004" name="Nature">
        <title>The DNA sequence and comparative analysis of human chromosome 5.</title>
        <authorList>
            <person name="Schmutz J."/>
            <person name="Martin J."/>
            <person name="Terry A."/>
            <person name="Couronne O."/>
            <person name="Grimwood J."/>
            <person name="Lowry S."/>
            <person name="Gordon L.A."/>
            <person name="Scott D."/>
            <person name="Xie G."/>
            <person name="Huang W."/>
            <person name="Hellsten U."/>
            <person name="Tran-Gyamfi M."/>
            <person name="She X."/>
            <person name="Prabhakar S."/>
            <person name="Aerts A."/>
            <person name="Altherr M."/>
            <person name="Bajorek E."/>
            <person name="Black S."/>
            <person name="Branscomb E."/>
            <person name="Caoile C."/>
            <person name="Challacombe J.F."/>
            <person name="Chan Y.M."/>
            <person name="Denys M."/>
            <person name="Detter J.C."/>
            <person name="Escobar J."/>
            <person name="Flowers D."/>
            <person name="Fotopulos D."/>
            <person name="Glavina T."/>
            <person name="Gomez M."/>
            <person name="Gonzales E."/>
            <person name="Goodstein D."/>
            <person name="Grigoriev I."/>
            <person name="Groza M."/>
            <person name="Hammon N."/>
            <person name="Hawkins T."/>
            <person name="Haydu L."/>
            <person name="Israni S."/>
            <person name="Jett J."/>
            <person name="Kadner K."/>
            <person name="Kimball H."/>
            <person name="Kobayashi A."/>
            <person name="Lopez F."/>
            <person name="Lou Y."/>
            <person name="Martinez D."/>
            <person name="Medina C."/>
            <person name="Morgan J."/>
            <person name="Nandkeshwar R."/>
            <person name="Noonan J.P."/>
            <person name="Pitluck S."/>
            <person name="Pollard M."/>
            <person name="Predki P."/>
            <person name="Priest J."/>
            <person name="Ramirez L."/>
            <person name="Retterer J."/>
            <person name="Rodriguez A."/>
            <person name="Rogers S."/>
            <person name="Salamov A."/>
            <person name="Salazar A."/>
            <person name="Thayer N."/>
            <person name="Tice H."/>
            <person name="Tsai M."/>
            <person name="Ustaszewska A."/>
            <person name="Vo N."/>
            <person name="Wheeler J."/>
            <person name="Wu K."/>
            <person name="Yang J."/>
            <person name="Dickson M."/>
            <person name="Cheng J.-F."/>
            <person name="Eichler E.E."/>
            <person name="Olsen A."/>
            <person name="Pennacchio L.A."/>
            <person name="Rokhsar D.S."/>
            <person name="Richardson P."/>
            <person name="Lucas S.M."/>
            <person name="Myers R.M."/>
            <person name="Rubin E.M."/>
        </authorList>
    </citation>
    <scope>NUCLEOTIDE SEQUENCE [LARGE SCALE GENOMIC DNA]</scope>
</reference>
<reference key="2">
    <citation type="journal article" date="2010" name="BMC Genomics">
        <title>Expression, tandem repeat copy number variation and stability of four macrosatellite arrays in the human genome.</title>
        <authorList>
            <person name="Tremblay D.C."/>
            <person name="Alexander G. Jr."/>
            <person name="Moseley S."/>
            <person name="Chadwick B.P."/>
        </authorList>
    </citation>
    <scope>TISSUE SPECIFICITY</scope>
</reference>